<dbReference type="EMBL" id="CY014775">
    <property type="protein sequence ID" value="ABI84679.1"/>
    <property type="molecule type" value="Genomic_RNA"/>
</dbReference>
<dbReference type="SMR" id="Q0A3Q4"/>
<dbReference type="GO" id="GO:0042025">
    <property type="term" value="C:host cell nucleus"/>
    <property type="evidence" value="ECO:0007669"/>
    <property type="project" value="UniProtKB-SubCell"/>
</dbReference>
<dbReference type="GO" id="GO:0044423">
    <property type="term" value="C:virion component"/>
    <property type="evidence" value="ECO:0007669"/>
    <property type="project" value="UniProtKB-UniRule"/>
</dbReference>
<dbReference type="GO" id="GO:0039675">
    <property type="term" value="P:exit of virus from host cell nucleus through nuclear pore"/>
    <property type="evidence" value="ECO:0007669"/>
    <property type="project" value="UniProtKB-UniRule"/>
</dbReference>
<dbReference type="Gene3D" id="1.10.287.230">
    <property type="match status" value="1"/>
</dbReference>
<dbReference type="Gene3D" id="1.10.287.10">
    <property type="entry name" value="S15/NS1, RNA-binding"/>
    <property type="match status" value="1"/>
</dbReference>
<dbReference type="HAMAP" id="MF_04067">
    <property type="entry name" value="INFV_NEP"/>
    <property type="match status" value="1"/>
</dbReference>
<dbReference type="InterPro" id="IPR000968">
    <property type="entry name" value="Flu_NS2"/>
</dbReference>
<dbReference type="Pfam" id="PF00601">
    <property type="entry name" value="Flu_NS2"/>
    <property type="match status" value="1"/>
</dbReference>
<dbReference type="SUPFAM" id="SSF101156">
    <property type="entry name" value="Nonstructural protein ns2, Nep, M1-binding domain"/>
    <property type="match status" value="1"/>
</dbReference>
<reference key="1">
    <citation type="journal article" date="2006" name="Science">
        <title>Large-scale sequence analysis of avian influenza isolates.</title>
        <authorList>
            <person name="Obenauer J.C."/>
            <person name="Denson J."/>
            <person name="Mehta P.K."/>
            <person name="Su X."/>
            <person name="Mukatira S."/>
            <person name="Finkelstein D.B."/>
            <person name="Xu X."/>
            <person name="Wang J."/>
            <person name="Ma J."/>
            <person name="Fan Y."/>
            <person name="Rakestraw K.M."/>
            <person name="Webster R.G."/>
            <person name="Hoffmann E."/>
            <person name="Krauss S."/>
            <person name="Zheng J."/>
            <person name="Zhang Z."/>
            <person name="Naeve C.W."/>
        </authorList>
    </citation>
    <scope>NUCLEOTIDE SEQUENCE [GENOMIC RNA]</scope>
</reference>
<comment type="function">
    <text evidence="1">Mediates the nuclear export of encapsidated genomic RNAs (ribonucleoproteins, RNPs). Acts as an adapter between viral RNPs complexes and the nuclear export machinery of the cell. Possesses no intrinsic RNA-binding activity, but includes a C-terminal M1-binding domain. This domain is believed to allow recognition of RNPs bound to the protein M1. Since protein M1 is not available in large quantities before late stages of infection, such an indirect recognition mechanism probably ensures that genomic RNPs are not exported from the host nucleus until sufficient quantities of viral mRNA and progeny genomic RNA have been synthesized. Furthermore, the RNPs enter the host cytoplasm only when associated with the M1 protein that is necessary to guide them to the plasma membrane. May down-regulate viral RNA synthesis when overproduced.</text>
</comment>
<comment type="subunit">
    <text evidence="1">Interacts with protein M1. May interact with host nucleoporin RAB/HRB and exportin XPO1/CRM1.</text>
</comment>
<comment type="subcellular location">
    <subcellularLocation>
        <location evidence="1">Virion</location>
    </subcellularLocation>
    <subcellularLocation>
        <location evidence="1">Host nucleus</location>
    </subcellularLocation>
</comment>
<comment type="alternative products">
    <event type="alternative splicing"/>
    <isoform>
        <id>Q0A3Q4-1</id>
        <name>NEP</name>
        <name>NS2</name>
        <sequence type="displayed"/>
    </isoform>
    <isoform>
        <id>Q0A3Q3-1</id>
        <name>NS1</name>
        <sequence type="external"/>
    </isoform>
</comment>
<comment type="similarity">
    <text evidence="1">Belongs to the influenza viruses NEP family.</text>
</comment>
<gene>
    <name evidence="1" type="primary">NS</name>
</gene>
<sequence length="121" mass="14338">MDSNTVSSFQDILMRMSKMQLGSSSEDLNGMITQFESLKLYRDSLGEAVMRMGDLHSLQSRNGKWREQLSQKFEEIRWLIEEVRHRLKITENSFEQITFMQALQLLLEVEQEIRTFSFQLI</sequence>
<name>NEP_I78AC</name>
<organismHost>
    <name type="scientific">Aves</name>
    <dbReference type="NCBI Taxonomy" id="8782"/>
</organismHost>
<organism>
    <name type="scientific">Influenza A virus (strain A/Turkey/Minnesota/501/1978 H6N8)</name>
    <dbReference type="NCBI Taxonomy" id="387259"/>
    <lineage>
        <taxon>Viruses</taxon>
        <taxon>Riboviria</taxon>
        <taxon>Orthornavirae</taxon>
        <taxon>Negarnaviricota</taxon>
        <taxon>Polyploviricotina</taxon>
        <taxon>Insthoviricetes</taxon>
        <taxon>Articulavirales</taxon>
        <taxon>Orthomyxoviridae</taxon>
        <taxon>Alphainfluenzavirus</taxon>
        <taxon>Alphainfluenzavirus influenzae</taxon>
        <taxon>Influenza A virus</taxon>
    </lineage>
</organism>
<keyword id="KW-0025">Alternative splicing</keyword>
<keyword id="KW-1048">Host nucleus</keyword>
<keyword id="KW-0945">Host-virus interaction</keyword>
<keyword id="KW-0813">Transport</keyword>
<keyword id="KW-0946">Virion</keyword>
<feature type="chain" id="PRO_0000324218" description="Nuclear export protein">
    <location>
        <begin position="1"/>
        <end position="121"/>
    </location>
</feature>
<feature type="short sequence motif" description="Nuclear export signal" evidence="1">
    <location>
        <begin position="12"/>
        <end position="21"/>
    </location>
</feature>
<feature type="short sequence motif" description="Nuclear export signal" evidence="1">
    <location>
        <begin position="85"/>
        <end position="94"/>
    </location>
</feature>
<protein>
    <recommendedName>
        <fullName evidence="1">Nuclear export protein</fullName>
        <shortName evidence="1">NEP</shortName>
    </recommendedName>
    <alternativeName>
        <fullName evidence="1">Non-structural protein 2</fullName>
        <shortName evidence="1">NS2</shortName>
    </alternativeName>
</protein>
<evidence type="ECO:0000255" key="1">
    <source>
        <dbReference type="HAMAP-Rule" id="MF_04067"/>
    </source>
</evidence>
<accession>Q0A3Q4</accession>
<proteinExistence type="inferred from homology"/>